<keyword id="KW-1015">Disulfide bond</keyword>
<keyword id="KW-0249">Electron transport</keyword>
<keyword id="KW-0408">Iron</keyword>
<keyword id="KW-0472">Membrane</keyword>
<keyword id="KW-0479">Metal-binding</keyword>
<keyword id="KW-0496">Mitochondrion</keyword>
<keyword id="KW-0999">Mitochondrion inner membrane</keyword>
<keyword id="KW-0560">Oxidoreductase</keyword>
<keyword id="KW-1185">Reference proteome</keyword>
<keyword id="KW-0679">Respiratory chain</keyword>
<keyword id="KW-0809">Transit peptide</keyword>
<keyword id="KW-0812">Transmembrane</keyword>
<keyword id="KW-1133">Transmembrane helix</keyword>
<keyword id="KW-0813">Transport</keyword>
<organism>
    <name type="scientific">Arabidopsis thaliana</name>
    <name type="common">Mouse-ear cress</name>
    <dbReference type="NCBI Taxonomy" id="3702"/>
    <lineage>
        <taxon>Eukaryota</taxon>
        <taxon>Viridiplantae</taxon>
        <taxon>Streptophyta</taxon>
        <taxon>Embryophyta</taxon>
        <taxon>Tracheophyta</taxon>
        <taxon>Spermatophyta</taxon>
        <taxon>Magnoliopsida</taxon>
        <taxon>eudicotyledons</taxon>
        <taxon>Gunneridae</taxon>
        <taxon>Pentapetalae</taxon>
        <taxon>rosids</taxon>
        <taxon>malvids</taxon>
        <taxon>Brassicales</taxon>
        <taxon>Brassicaceae</taxon>
        <taxon>Camelineae</taxon>
        <taxon>Arabidopsis</taxon>
    </lineage>
</organism>
<protein>
    <recommendedName>
        <fullName>Ubiquinol oxidase 2, mitochondrial</fullName>
        <ecNumber>1.10.3.11</ecNumber>
    </recommendedName>
    <alternativeName>
        <fullName>Alternative oxidase 2</fullName>
    </alternativeName>
</protein>
<feature type="transit peptide" description="Mitochondrion" evidence="5">
    <location>
        <begin position="1"/>
        <end position="21"/>
    </location>
</feature>
<feature type="chain" id="PRO_0000001734" description="Ubiquinol oxidase 2, mitochondrial">
    <location>
        <begin position="22"/>
        <end position="353"/>
    </location>
</feature>
<feature type="transmembrane region" description="Helical" evidence="5">
    <location>
        <begin position="178"/>
        <end position="198"/>
    </location>
</feature>
<feature type="transmembrane region" description="Helical" evidence="5">
    <location>
        <begin position="240"/>
        <end position="260"/>
    </location>
</feature>
<feature type="binding site" evidence="2">
    <location>
        <position position="182"/>
    </location>
    <ligand>
        <name>Fe cation</name>
        <dbReference type="ChEBI" id="CHEBI:24875"/>
        <label>1</label>
    </ligand>
</feature>
<feature type="binding site" evidence="2">
    <location>
        <position position="221"/>
    </location>
    <ligand>
        <name>Fe cation</name>
        <dbReference type="ChEBI" id="CHEBI:24875"/>
        <label>1</label>
    </ligand>
</feature>
<feature type="binding site" evidence="2">
    <location>
        <position position="221"/>
    </location>
    <ligand>
        <name>Fe cation</name>
        <dbReference type="ChEBI" id="CHEBI:24875"/>
        <label>2</label>
    </ligand>
</feature>
<feature type="binding site" evidence="2">
    <location>
        <position position="224"/>
    </location>
    <ligand>
        <name>Fe cation</name>
        <dbReference type="ChEBI" id="CHEBI:24875"/>
        <label>1</label>
    </ligand>
</feature>
<feature type="binding site" evidence="2">
    <location>
        <position position="272"/>
    </location>
    <ligand>
        <name>Fe cation</name>
        <dbReference type="ChEBI" id="CHEBI:24875"/>
        <label>2</label>
    </ligand>
</feature>
<feature type="binding site" evidence="2">
    <location>
        <position position="323"/>
    </location>
    <ligand>
        <name>Fe cation</name>
        <dbReference type="ChEBI" id="CHEBI:24875"/>
        <label>1</label>
    </ligand>
</feature>
<feature type="binding site" evidence="2">
    <location>
        <position position="323"/>
    </location>
    <ligand>
        <name>Fe cation</name>
        <dbReference type="ChEBI" id="CHEBI:24875"/>
        <label>2</label>
    </ligand>
</feature>
<feature type="binding site" evidence="2">
    <location>
        <position position="326"/>
    </location>
    <ligand>
        <name>Fe cation</name>
        <dbReference type="ChEBI" id="CHEBI:24875"/>
        <label>2</label>
    </ligand>
</feature>
<feature type="disulfide bond" description="Interchain" evidence="4">
    <location>
        <position position="126"/>
    </location>
</feature>
<accession>O22049</accession>
<accession>Q4PS98</accession>
<proteinExistence type="evidence at protein level"/>
<reference key="1">
    <citation type="journal article" date="1997" name="Plant Mol. Biol.">
        <title>Characterization of the gene family for alternative oxidase from Arabidopsis thaliana.</title>
        <authorList>
            <person name="Saisho D."/>
            <person name="Nambara E."/>
            <person name="Naito S."/>
            <person name="Tsutsumi N."/>
            <person name="Hirai A."/>
            <person name="Nakazono M."/>
        </authorList>
    </citation>
    <scope>NUCLEOTIDE SEQUENCE [GENOMIC DNA]</scope>
    <source>
        <strain>cv. Columbia</strain>
        <tissue>Leaf</tissue>
        <tissue>Stem</tissue>
    </source>
</reference>
<reference key="2">
    <citation type="journal article" date="2001" name="Genes Genet. Syst.">
        <title>The gene for alternative oxidase-2 (AOX2) from Arabidopsis thaliana consists of five exons unlike other AOX genes and is transcribed at an early stage during germination.</title>
        <authorList>
            <person name="Saisho D."/>
            <person name="Nakazono M."/>
            <person name="Lee K.-H."/>
            <person name="Tsutsumi N."/>
            <person name="Akita S."/>
            <person name="Hirai A."/>
        </authorList>
    </citation>
    <scope>SEQUENCE REVISION</scope>
    <scope>SUBCELLULAR LOCATION</scope>
    <scope>TISSUE SPECIFICITY</scope>
    <scope>DEVELOPMENTAL STAGE</scope>
    <scope>INDUCTION</scope>
    <source>
        <strain>cv. Columbia GL1</strain>
    </source>
</reference>
<reference key="3">
    <citation type="journal article" date="1997" name="DNA Res.">
        <title>Structural analysis of Arabidopsis thaliana chromosome 5. III. Sequence features of the regions of 1,191,918 bp covered by seventeen physically assigned P1 clones.</title>
        <authorList>
            <person name="Nakamura Y."/>
            <person name="Sato S."/>
            <person name="Kaneko T."/>
            <person name="Kotani H."/>
            <person name="Asamizu E."/>
            <person name="Miyajima N."/>
            <person name="Tabata S."/>
        </authorList>
    </citation>
    <scope>NUCLEOTIDE SEQUENCE [LARGE SCALE GENOMIC DNA]</scope>
    <source>
        <strain>cv. Columbia</strain>
    </source>
</reference>
<reference key="4">
    <citation type="journal article" date="2017" name="Plant J.">
        <title>Araport11: a complete reannotation of the Arabidopsis thaliana reference genome.</title>
        <authorList>
            <person name="Cheng C.Y."/>
            <person name="Krishnakumar V."/>
            <person name="Chan A.P."/>
            <person name="Thibaud-Nissen F."/>
            <person name="Schobel S."/>
            <person name="Town C.D."/>
        </authorList>
    </citation>
    <scope>GENOME REANNOTATION</scope>
    <source>
        <strain>cv. Columbia</strain>
    </source>
</reference>
<reference key="5">
    <citation type="submission" date="2005-05" db="EMBL/GenBank/DDBJ databases">
        <authorList>
            <person name="Underwood B.A."/>
            <person name="Xiao Y.-L."/>
            <person name="Moskal W.A. Jr."/>
            <person name="Monaghan E.L."/>
            <person name="Wang W."/>
            <person name="Redman J.C."/>
            <person name="Wu H.C."/>
            <person name="Utterback T."/>
            <person name="Town C.D."/>
        </authorList>
    </citation>
    <scope>NUCLEOTIDE SEQUENCE [LARGE SCALE MRNA]</scope>
    <source>
        <strain>cv. Columbia</strain>
    </source>
</reference>
<reference key="6">
    <citation type="journal article" date="1999" name="FEBS Lett.">
        <title>A revised model of the active site of alternative oxidase.</title>
        <authorList>
            <person name="Andersson M.E."/>
            <person name="Nordlund P."/>
        </authorList>
    </citation>
    <scope>IRON-BINDING SITES</scope>
</reference>
<reference key="7">
    <citation type="journal article" date="2005" name="Plant Mol. Biol.">
        <title>Stress-induced co-expression of alternative respiratory chain components in Arabidopsis thaliana.</title>
        <authorList>
            <person name="Clifton R."/>
            <person name="Lister R."/>
            <person name="Parker K.L."/>
            <person name="Sappl P.G."/>
            <person name="Elhafez D."/>
            <person name="Millar A.H."/>
            <person name="Day D.A."/>
            <person name="Whelan J."/>
        </authorList>
    </citation>
    <scope>INDUCTION BY ABIOTIC STRESSES</scope>
</reference>
<reference key="8">
    <citation type="journal article" date="2006" name="Biochim. Biophys. Acta">
        <title>Alternative oxidases in Arabidopsis: a comparative analysis of differential expression in the gene family provides new insights into function of non-phosphorylating bypasses.</title>
        <authorList>
            <person name="Clifton R."/>
            <person name="Millar A.H."/>
            <person name="Whelan J."/>
        </authorList>
    </citation>
    <scope>DEVELOPMENTAL STAGE</scope>
    <scope>TISSUE SPECIFICITY</scope>
</reference>
<reference key="9">
    <citation type="journal article" date="2012" name="Planta">
        <title>Involvement of hydrogen peroxide, calcium, and ethylene in the induction of the alternative pathway in chilling-stressed Arabidopsis callus.</title>
        <authorList>
            <person name="Wang H."/>
            <person name="Huang J."/>
            <person name="Liang X."/>
            <person name="Bi Y."/>
        </authorList>
    </citation>
    <scope>INDUCTION BY COLD AND ETHYLENE</scope>
</reference>
<gene>
    <name type="primary">AOX2</name>
    <name type="ordered locus">At5g64210</name>
    <name type="ORF">MSJ1.5</name>
</gene>
<comment type="function">
    <text evidence="1">Catalyzes the cyanide-resistant oxidation of ubiquinol and the reduction of molecular oxygen to water, but does not translocate protons and consequently is not linked to oxidative phosphorylation. May increase respiration when the cytochrome respiratory pathway is restricted, or in response to low temperatures (By similarity).</text>
</comment>
<comment type="catalytic activity">
    <reaction>
        <text>2 a ubiquinol + O2 = 2 a ubiquinone + 2 H2O</text>
        <dbReference type="Rhea" id="RHEA:30255"/>
        <dbReference type="Rhea" id="RHEA-COMP:9565"/>
        <dbReference type="Rhea" id="RHEA-COMP:9566"/>
        <dbReference type="ChEBI" id="CHEBI:15377"/>
        <dbReference type="ChEBI" id="CHEBI:15379"/>
        <dbReference type="ChEBI" id="CHEBI:16389"/>
        <dbReference type="ChEBI" id="CHEBI:17976"/>
        <dbReference type="EC" id="1.10.3.11"/>
    </reaction>
</comment>
<comment type="cofactor">
    <cofactor evidence="3">
        <name>Fe cation</name>
        <dbReference type="ChEBI" id="CHEBI:24875"/>
    </cofactor>
    <text evidence="3">Binds 2 iron ions per subunit.</text>
</comment>
<comment type="subunit">
    <text evidence="10">Homodimer; disulfide-linked.</text>
</comment>
<comment type="subcellular location">
    <subcellularLocation>
        <location evidence="6">Mitochondrion inner membrane</location>
        <topology evidence="6">Multi-pass membrane protein</topology>
    </subcellularLocation>
    <text>Mitochondrial, possibly in the inner surface of the inner mitochondrial membrane.</text>
</comment>
<comment type="tissue specificity">
    <text evidence="6 8">Maximally expressed in dry seeds. Detected in roots, stems and leaves.</text>
</comment>
<comment type="developmental stage">
    <text evidence="6 8">Expressed predominantly during early stages of germination with maximum level at 12 hours after imbibition and at the latter stages of silique maturation. Accumulates in dry seeds.</text>
</comment>
<comment type="induction">
    <text evidence="6 7 9">No effect of antimycin A, ethylene or cold treatments. Up-regulated by paraquat and cysteine treatments, but down-regulated by erythromycin, citrate, glucose and H(2)O(2) treatments.</text>
</comment>
<comment type="similarity">
    <text evidence="10">Belongs to the alternative oxidase family.</text>
</comment>
<comment type="sequence caution" evidence="10">
    <conflict type="erroneous gene model prediction">
        <sequence resource="EMBL-CDS" id="BAB09852"/>
    </conflict>
</comment>
<dbReference type="EC" id="1.10.3.11"/>
<dbReference type="EMBL" id="AB003176">
    <property type="protein sequence ID" value="BAA22636.2"/>
    <property type="molecule type" value="Genomic_DNA"/>
</dbReference>
<dbReference type="EMBL" id="AB008268">
    <property type="protein sequence ID" value="BAB09852.1"/>
    <property type="status" value="ALT_SEQ"/>
    <property type="molecule type" value="Genomic_DNA"/>
</dbReference>
<dbReference type="EMBL" id="CP002688">
    <property type="protein sequence ID" value="AED97855.1"/>
    <property type="molecule type" value="Genomic_DNA"/>
</dbReference>
<dbReference type="EMBL" id="DQ056738">
    <property type="protein sequence ID" value="AAY78882.1"/>
    <property type="molecule type" value="mRNA"/>
</dbReference>
<dbReference type="RefSeq" id="NP_201226.2">
    <property type="nucleotide sequence ID" value="NM_125817.3"/>
</dbReference>
<dbReference type="SMR" id="O22049"/>
<dbReference type="BioGRID" id="21784">
    <property type="interactions" value="2"/>
</dbReference>
<dbReference type="IntAct" id="O22049">
    <property type="interactions" value="2"/>
</dbReference>
<dbReference type="STRING" id="3702.O22049"/>
<dbReference type="PaxDb" id="3702-AT5G64210.1"/>
<dbReference type="ProteomicsDB" id="244415"/>
<dbReference type="EnsemblPlants" id="AT5G64210.1">
    <property type="protein sequence ID" value="AT5G64210.1"/>
    <property type="gene ID" value="AT5G64210"/>
</dbReference>
<dbReference type="GeneID" id="836542"/>
<dbReference type="Gramene" id="AT5G64210.1">
    <property type="protein sequence ID" value="AT5G64210.1"/>
    <property type="gene ID" value="AT5G64210"/>
</dbReference>
<dbReference type="KEGG" id="ath:AT5G64210"/>
<dbReference type="Araport" id="AT5G64210"/>
<dbReference type="TAIR" id="AT5G64210">
    <property type="gene designation" value="AOX2"/>
</dbReference>
<dbReference type="eggNOG" id="ENOG502QSB5">
    <property type="taxonomic scope" value="Eukaryota"/>
</dbReference>
<dbReference type="HOGENOM" id="CLU_041974_0_1_1"/>
<dbReference type="InParanoid" id="O22049"/>
<dbReference type="OMA" id="FNIRSEH"/>
<dbReference type="OrthoDB" id="16906at2759"/>
<dbReference type="PhylomeDB" id="O22049"/>
<dbReference type="PRO" id="PR:O22049"/>
<dbReference type="Proteomes" id="UP000006548">
    <property type="component" value="Chromosome 5"/>
</dbReference>
<dbReference type="ExpressionAtlas" id="O22049">
    <property type="expression patterns" value="baseline and differential"/>
</dbReference>
<dbReference type="GO" id="GO:0009507">
    <property type="term" value="C:chloroplast"/>
    <property type="evidence" value="ECO:0000314"/>
    <property type="project" value="TAIR"/>
</dbReference>
<dbReference type="GO" id="GO:0005743">
    <property type="term" value="C:mitochondrial inner membrane"/>
    <property type="evidence" value="ECO:0007669"/>
    <property type="project" value="UniProtKB-SubCell"/>
</dbReference>
<dbReference type="GO" id="GO:0005739">
    <property type="term" value="C:mitochondrion"/>
    <property type="evidence" value="ECO:0000314"/>
    <property type="project" value="TAIR"/>
</dbReference>
<dbReference type="GO" id="GO:0009916">
    <property type="term" value="F:alternative oxidase activity"/>
    <property type="evidence" value="ECO:0000250"/>
    <property type="project" value="TAIR"/>
</dbReference>
<dbReference type="GO" id="GO:0046872">
    <property type="term" value="F:metal ion binding"/>
    <property type="evidence" value="ECO:0007669"/>
    <property type="project" value="UniProtKB-KW"/>
</dbReference>
<dbReference type="GO" id="GO:0106292">
    <property type="term" value="F:superoxide-generating NADPH oxidase activity"/>
    <property type="evidence" value="ECO:0000314"/>
    <property type="project" value="TAIR"/>
</dbReference>
<dbReference type="GO" id="GO:0102721">
    <property type="term" value="F:ubiquinol:oxygen oxidoreductase activity"/>
    <property type="evidence" value="ECO:0007669"/>
    <property type="project" value="UniProtKB-EC"/>
</dbReference>
<dbReference type="GO" id="GO:0010230">
    <property type="term" value="P:alternative respiration"/>
    <property type="evidence" value="ECO:0000250"/>
    <property type="project" value="TAIR"/>
</dbReference>
<dbReference type="CDD" id="cd01053">
    <property type="entry name" value="AOX"/>
    <property type="match status" value="1"/>
</dbReference>
<dbReference type="FunFam" id="1.20.1260.140:FF:000001">
    <property type="entry name" value="Ubiquinol oxidase"/>
    <property type="match status" value="1"/>
</dbReference>
<dbReference type="Gene3D" id="1.20.1260.140">
    <property type="entry name" value="Alternative oxidase"/>
    <property type="match status" value="1"/>
</dbReference>
<dbReference type="InterPro" id="IPR002680">
    <property type="entry name" value="AOX"/>
</dbReference>
<dbReference type="InterPro" id="IPR038659">
    <property type="entry name" value="AOX_sf"/>
</dbReference>
<dbReference type="PANTHER" id="PTHR31803">
    <property type="entry name" value="ALTERNATIVE OXIDASE"/>
    <property type="match status" value="1"/>
</dbReference>
<dbReference type="PANTHER" id="PTHR31803:SF6">
    <property type="entry name" value="UBIQUINOL OXIDASE 2, MITOCHONDRIAL"/>
    <property type="match status" value="1"/>
</dbReference>
<dbReference type="Pfam" id="PF01786">
    <property type="entry name" value="AOX"/>
    <property type="match status" value="1"/>
</dbReference>
<sequence>MSQLITKAALRVLLVCGRGNCNMFVSSVSSTSVMKSPYEITAPMRIHDWCGGFGDFKIGSKHVQGNFNLRWMGMSSASAMEKKDENLTVKKGQNGGGSVAVPSYWGIETAKMKITRKDGSDWPWNCFMPWETYQANLSIDLKKHHVPKNIADKVAYRIVKLLRIPTDIFFQRRYGCRAMMLETVAAVPGMVGGMLLHLKSIRKFEHSGGWIKALLEEAENERMHLMTMMELVKPKWYERLLVMLVQGIFFNSFFVCYVISPRLAHRVVGYLEEEAIHSYTEFLKDIDNGKIENVAAPAIAIDYWRLPKDATLKDVVTVIRADEAHHRDVNHFASDIRNQGKELREAAAPIGYH</sequence>
<name>AOX2_ARATH</name>
<evidence type="ECO:0000250" key="1"/>
<evidence type="ECO:0000250" key="2">
    <source>
        <dbReference type="UniProtKB" id="Q26710"/>
    </source>
</evidence>
<evidence type="ECO:0000250" key="3">
    <source>
        <dbReference type="UniProtKB" id="Q39219"/>
    </source>
</evidence>
<evidence type="ECO:0000250" key="4">
    <source>
        <dbReference type="UniProtKB" id="Q41224"/>
    </source>
</evidence>
<evidence type="ECO:0000255" key="5"/>
<evidence type="ECO:0000269" key="6">
    <source>
    </source>
</evidence>
<evidence type="ECO:0000269" key="7">
    <source>
    </source>
</evidence>
<evidence type="ECO:0000269" key="8">
    <source>
    </source>
</evidence>
<evidence type="ECO:0000269" key="9">
    <source>
    </source>
</evidence>
<evidence type="ECO:0000305" key="10"/>